<proteinExistence type="evidence at protein level"/>
<keyword id="KW-0175">Coiled coil</keyword>
<keyword id="KW-1032">Host cell membrane</keyword>
<keyword id="KW-1043">Host membrane</keyword>
<keyword id="KW-0375">Hydrogen ion transport</keyword>
<keyword id="KW-0407">Ion channel</keyword>
<keyword id="KW-0406">Ion transport</keyword>
<keyword id="KW-0472">Membrane</keyword>
<keyword id="KW-0597">Phosphoprotein</keyword>
<keyword id="KW-1185">Reference proteome</keyword>
<keyword id="KW-0735">Signal-anchor</keyword>
<keyword id="KW-0812">Transmembrane</keyword>
<keyword id="KW-1133">Transmembrane helix</keyword>
<keyword id="KW-0813">Transport</keyword>
<keyword id="KW-1182">Viral ion channel</keyword>
<keyword id="KW-0946">Virion</keyword>
<accession>P03493</accession>
<dbReference type="EMBL" id="J02094">
    <property type="status" value="NOT_ANNOTATED_CDS"/>
    <property type="molecule type" value="Genomic_RNA"/>
</dbReference>
<dbReference type="PIR" id="A04086">
    <property type="entry name" value="MFIV2"/>
</dbReference>
<dbReference type="SMR" id="P03493"/>
<dbReference type="TCDB" id="1.A.58.1.1">
    <property type="family name" value="the type b influenza virus matrix protein 2 (bm2-c) family"/>
</dbReference>
<dbReference type="Proteomes" id="UP000008158">
    <property type="component" value="Genome"/>
</dbReference>
<dbReference type="GO" id="GO:0020002">
    <property type="term" value="C:host cell plasma membrane"/>
    <property type="evidence" value="ECO:0007669"/>
    <property type="project" value="UniProtKB-SubCell"/>
</dbReference>
<dbReference type="GO" id="GO:0016020">
    <property type="term" value="C:membrane"/>
    <property type="evidence" value="ECO:0007669"/>
    <property type="project" value="UniProtKB-KW"/>
</dbReference>
<dbReference type="GO" id="GO:0055036">
    <property type="term" value="C:virion membrane"/>
    <property type="evidence" value="ECO:0007669"/>
    <property type="project" value="UniProtKB-SubCell"/>
</dbReference>
<dbReference type="GO" id="GO:0015267">
    <property type="term" value="F:channel activity"/>
    <property type="evidence" value="ECO:0007669"/>
    <property type="project" value="UniProtKB-KW"/>
</dbReference>
<dbReference type="GO" id="GO:1902600">
    <property type="term" value="P:proton transmembrane transport"/>
    <property type="evidence" value="ECO:0007669"/>
    <property type="project" value="UniProtKB-KW"/>
</dbReference>
<dbReference type="Gene3D" id="6.10.250.350">
    <property type="match status" value="1"/>
</dbReference>
<dbReference type="InterPro" id="IPR006859">
    <property type="entry name" value="Flu_B_M2"/>
</dbReference>
<dbReference type="Pfam" id="PF04772">
    <property type="entry name" value="Flu_B_M2"/>
    <property type="match status" value="1"/>
</dbReference>
<name>BM2_INBLE</name>
<organismHost>
    <name type="scientific">Homo sapiens</name>
    <name type="common">Human</name>
    <dbReference type="NCBI Taxonomy" id="9606"/>
</organismHost>
<protein>
    <recommendedName>
        <fullName>Matrix protein 2</fullName>
    </recommendedName>
    <alternativeName>
        <fullName>BM2</fullName>
    </alternativeName>
</protein>
<gene>
    <name type="primary">M</name>
</gene>
<comment type="function">
    <text evidence="1">Forms presumably a highly low-pH gated proton-selective channel. Trp-23 may function as a minimalistic gate that opens and closes the pore. When the environmental pH is lower than a threshold, the BM2 channel would be activated and selectively transport protons across the membrane from the extracellular side to the cytoplasmic side. Crucial for the uncoating process. When the virion is internalized into the endosome, the channel acidifies the virion's interior, promoting the dissociation of matrix protein 1 (M1) from the ribonucleoprotein (RNP) thus allowing the transport of the RNP from the virion into the cell's nucleus. Also plays a role in viral protein secretory pathway. Elevates the intravesicular pH of normally acidic compartments, such as trans-Golgi network, preventing newly formed hemagglutinin from premature switching to the fusion-active conformation (By similarity). Plays a crucial role in virion assembly. Expressed in the late phase of the infection (By similarity).</text>
</comment>
<comment type="subunit">
    <text evidence="5">Homotetramer.</text>
</comment>
<comment type="subcellular location">
    <subcellularLocation>
        <location evidence="6">Virion membrane</location>
        <topology evidence="6">Single-pass type III membrane protein</topology>
    </subcellularLocation>
    <subcellularLocation>
        <location evidence="3">Host cell membrane</location>
        <topology evidence="3">Single-pass type III membrane protein</topology>
    </subcellularLocation>
    <text evidence="1">Transported to the plasma membrane through the trans Golgi network.</text>
</comment>
<comment type="PTM">
    <text>Phosphorylated by host.</text>
</comment>
<comment type="miscellaneous">
    <text>Influenza B virus genome RNA segment 7 encodes the M1 (AC P03489) and BM2 proteins. Normal translation produces the M1 protein. The M1 termination codon overlaps the BM2 initiation codon in an overlapping stop-start pentanucleotide 5'-UAAUG-3'. Termination of M1 translation triggers reinitiation on the BM2 AUG in the +2 open reading frame.</text>
</comment>
<evidence type="ECO:0000250" key="1"/>
<evidence type="ECO:0000255" key="2"/>
<evidence type="ECO:0000269" key="3">
    <source>
    </source>
</evidence>
<evidence type="ECO:0000269" key="4">
    <source>
    </source>
</evidence>
<evidence type="ECO:0000269" key="5">
    <source>
    </source>
</evidence>
<evidence type="ECO:0000305" key="6"/>
<organism>
    <name type="scientific">Influenza B virus (strain B/Lee/1940)</name>
    <dbReference type="NCBI Taxonomy" id="518987"/>
    <lineage>
        <taxon>Viruses</taxon>
        <taxon>Riboviria</taxon>
        <taxon>Orthornavirae</taxon>
        <taxon>Negarnaviricota</taxon>
        <taxon>Polyploviricotina</taxon>
        <taxon>Insthoviricetes</taxon>
        <taxon>Articulavirales</taxon>
        <taxon>Orthomyxoviridae</taxon>
        <taxon>Betainfluenzavirus</taxon>
        <taxon>Betainfluenzavirus influenzae</taxon>
        <taxon>Influenza B virus</taxon>
    </lineage>
</organism>
<reference key="1">
    <citation type="journal article" date="1982" name="Virology">
        <title>Sequence of RNA segment 7 of the influenza B virus genome: partial amino acid homology between the membrane proteins (M1) of influenza A and B viruses and conservation of a second open reading frame.</title>
        <authorList>
            <person name="Briedis D.J."/>
            <person name="Lamb R.A."/>
            <person name="Choppin P.W."/>
        </authorList>
    </citation>
    <scope>NUCLEOTIDE SEQUENCE [GENOMIC RNA]</scope>
</reference>
<reference key="2">
    <citation type="journal article" date="2003" name="Virology">
        <title>Influenza B virus BM2 protein is an oligomeric integral membrane protein expressed at the cell surface.</title>
        <authorList>
            <person name="Paterson R.G."/>
            <person name="Takeda M."/>
            <person name="Ohigashi Y."/>
            <person name="Pinto L.H."/>
            <person name="Lamb R.A."/>
        </authorList>
    </citation>
    <scope>SUBCELLULAR LOCATION</scope>
</reference>
<reference key="3">
    <citation type="journal article" date="2003" name="Dev. Cell">
        <title>Influenza B virus BM2 protein has ion channel activity that conducts protons across membranes.</title>
        <authorList>
            <person name="Mould J.A."/>
            <person name="Paterson R.G."/>
            <person name="Takeda M."/>
            <person name="Ohigashi Y."/>
            <person name="Venkataraman P."/>
            <person name="Lamb R.A."/>
            <person name="Pinto L.H."/>
        </authorList>
    </citation>
    <scope>MUTAGENESIS OF HIS-19 AND TRP-23</scope>
</reference>
<reference key="4">
    <citation type="journal article" date="2009" name="Nat. Struct. Mol. Biol.">
        <title>Flu BM2 structure and function.</title>
        <authorList>
            <person name="Cross T.A."/>
        </authorList>
    </citation>
    <scope>REVIEW</scope>
    <scope>SUBUNIT</scope>
</reference>
<feature type="chain" id="PRO_0000078898" description="Matrix protein 2">
    <location>
        <begin position="1"/>
        <end position="109"/>
    </location>
</feature>
<feature type="topological domain" description="Virion surface" evidence="2">
    <location>
        <begin position="1"/>
        <end position="4"/>
    </location>
</feature>
<feature type="transmembrane region" description="Helical; Signal-anchor for type III membrane protein" evidence="2">
    <location>
        <begin position="5"/>
        <end position="27"/>
    </location>
</feature>
<feature type="topological domain" description="Intravirion" evidence="2">
    <location>
        <begin position="28"/>
        <end position="109"/>
    </location>
</feature>
<feature type="coiled-coil region" evidence="2">
    <location>
        <begin position="58"/>
        <end position="81"/>
    </location>
</feature>
<feature type="site" description="Essential for channel activity, possibly by being protonated during channel activation, and by forming the channel gate and the selective filter" evidence="6">
    <location>
        <position position="19"/>
    </location>
</feature>
<feature type="site" description="Seems to be involved in pH gating" evidence="6">
    <location>
        <position position="23"/>
    </location>
</feature>
<feature type="mutagenesis site" description="Complete loss of ion channel activity." evidence="4">
    <original>H</original>
    <variation>C</variation>
    <location>
        <position position="19"/>
    </location>
</feature>
<feature type="mutagenesis site" description="Partial loss of ion channel activity." evidence="4">
    <original>W</original>
    <variation>C</variation>
    <location>
        <position position="23"/>
    </location>
</feature>
<sequence length="109" mass="12522">MLEPLQILSICSFILSALHFMAWTIGHLNQIKRGVNLKIQIRNPNKEAINREVSILRHNYQKEIQAKETMKKILSDNMEVLGDHIVVEGLSTDEIIKMGETVLEVEELQ</sequence>